<proteinExistence type="inferred from homology"/>
<sequence length="236" mass="25620">MLKLEKITYLYDHLPMCFDLRIQPGERVAILGPSGAGKSTLLSLIAGFLAPTGGHMLLNNQDHTASTPAQRPVSMLFQENNLFAHLTVEQNIGLGLHPGLKLSGEQRLLLQHIAQQVGLESCLDRLPAQLSGGQRQRAALARCLVRSQPILLLDEPFSALDPALRNEMLQLVDQVCINRQLTLLMVSHNLDDAARIAQRTLLIVEGRIDYDGPTQALVDGSAAKASVLGIKSAVIS</sequence>
<reference key="1">
    <citation type="journal article" date="2001" name="Nature">
        <title>Genome sequence of Yersinia pestis, the causative agent of plague.</title>
        <authorList>
            <person name="Parkhill J."/>
            <person name="Wren B.W."/>
            <person name="Thomson N.R."/>
            <person name="Titball R.W."/>
            <person name="Holden M.T.G."/>
            <person name="Prentice M.B."/>
            <person name="Sebaihia M."/>
            <person name="James K.D."/>
            <person name="Churcher C.M."/>
            <person name="Mungall K.L."/>
            <person name="Baker S."/>
            <person name="Basham D."/>
            <person name="Bentley S.D."/>
            <person name="Brooks K."/>
            <person name="Cerdeno-Tarraga A.-M."/>
            <person name="Chillingworth T."/>
            <person name="Cronin A."/>
            <person name="Davies R.M."/>
            <person name="Davis P."/>
            <person name="Dougan G."/>
            <person name="Feltwell T."/>
            <person name="Hamlin N."/>
            <person name="Holroyd S."/>
            <person name="Jagels K."/>
            <person name="Karlyshev A.V."/>
            <person name="Leather S."/>
            <person name="Moule S."/>
            <person name="Oyston P.C.F."/>
            <person name="Quail M.A."/>
            <person name="Rutherford K.M."/>
            <person name="Simmonds M."/>
            <person name="Skelton J."/>
            <person name="Stevens K."/>
            <person name="Whitehead S."/>
            <person name="Barrell B.G."/>
        </authorList>
    </citation>
    <scope>NUCLEOTIDE SEQUENCE [LARGE SCALE GENOMIC DNA]</scope>
    <source>
        <strain>CO-92 / Biovar Orientalis</strain>
    </source>
</reference>
<reference key="2">
    <citation type="journal article" date="2002" name="J. Bacteriol.">
        <title>Genome sequence of Yersinia pestis KIM.</title>
        <authorList>
            <person name="Deng W."/>
            <person name="Burland V."/>
            <person name="Plunkett G. III"/>
            <person name="Boutin A."/>
            <person name="Mayhew G.F."/>
            <person name="Liss P."/>
            <person name="Perna N.T."/>
            <person name="Rose D.J."/>
            <person name="Mau B."/>
            <person name="Zhou S."/>
            <person name="Schwartz D.C."/>
            <person name="Fetherston J.D."/>
            <person name="Lindler L.E."/>
            <person name="Brubaker R.R."/>
            <person name="Plano G.V."/>
            <person name="Straley S.C."/>
            <person name="McDonough K.A."/>
            <person name="Nilles M.L."/>
            <person name="Matson J.S."/>
            <person name="Blattner F.R."/>
            <person name="Perry R.D."/>
        </authorList>
    </citation>
    <scope>NUCLEOTIDE SEQUENCE [LARGE SCALE GENOMIC DNA]</scope>
    <source>
        <strain>KIM10+ / Biovar Mediaevalis</strain>
    </source>
</reference>
<reference key="3">
    <citation type="journal article" date="2004" name="DNA Res.">
        <title>Complete genome sequence of Yersinia pestis strain 91001, an isolate avirulent to humans.</title>
        <authorList>
            <person name="Song Y."/>
            <person name="Tong Z."/>
            <person name="Wang J."/>
            <person name="Wang L."/>
            <person name="Guo Z."/>
            <person name="Han Y."/>
            <person name="Zhang J."/>
            <person name="Pei D."/>
            <person name="Zhou D."/>
            <person name="Qin H."/>
            <person name="Pang X."/>
            <person name="Han Y."/>
            <person name="Zhai J."/>
            <person name="Li M."/>
            <person name="Cui B."/>
            <person name="Qi Z."/>
            <person name="Jin L."/>
            <person name="Dai R."/>
            <person name="Chen F."/>
            <person name="Li S."/>
            <person name="Ye C."/>
            <person name="Du Z."/>
            <person name="Lin W."/>
            <person name="Wang J."/>
            <person name="Yu J."/>
            <person name="Yang H."/>
            <person name="Wang J."/>
            <person name="Huang P."/>
            <person name="Yang R."/>
        </authorList>
    </citation>
    <scope>NUCLEOTIDE SEQUENCE [LARGE SCALE GENOMIC DNA]</scope>
    <source>
        <strain>91001 / Biovar Mediaevalis</strain>
    </source>
</reference>
<dbReference type="EC" id="7.6.2.15" evidence="1"/>
<dbReference type="EMBL" id="AL590842">
    <property type="protein sequence ID" value="CAL19201.1"/>
    <property type="status" value="ALT_INIT"/>
    <property type="molecule type" value="Genomic_DNA"/>
</dbReference>
<dbReference type="EMBL" id="AE009952">
    <property type="protein sequence ID" value="AAM87201.1"/>
    <property type="status" value="ALT_INIT"/>
    <property type="molecule type" value="Genomic_DNA"/>
</dbReference>
<dbReference type="EMBL" id="AE017042">
    <property type="protein sequence ID" value="AAS63807.1"/>
    <property type="status" value="ALT_INIT"/>
    <property type="molecule type" value="Genomic_DNA"/>
</dbReference>
<dbReference type="RefSeq" id="WP_002210464.1">
    <property type="nucleotide sequence ID" value="NZ_WUCM01000024.1"/>
</dbReference>
<dbReference type="RefSeq" id="YP_002345594.1">
    <property type="nucleotide sequence ID" value="NC_003143.1"/>
</dbReference>
<dbReference type="SMR" id="Q0WJE4"/>
<dbReference type="STRING" id="214092.YPO0520"/>
<dbReference type="PaxDb" id="214092-YPO0520"/>
<dbReference type="EnsemblBacteria" id="AAS63807">
    <property type="protein sequence ID" value="AAS63807"/>
    <property type="gene ID" value="YP_3659"/>
</dbReference>
<dbReference type="GeneID" id="57974090"/>
<dbReference type="KEGG" id="ype:YPO0520"/>
<dbReference type="KEGG" id="ypk:y3653"/>
<dbReference type="KEGG" id="ypm:YP_3659"/>
<dbReference type="PATRIC" id="fig|214092.21.peg.773"/>
<dbReference type="eggNOG" id="COG3840">
    <property type="taxonomic scope" value="Bacteria"/>
</dbReference>
<dbReference type="HOGENOM" id="CLU_000604_1_22_6"/>
<dbReference type="OMA" id="FNRFAHD"/>
<dbReference type="OrthoDB" id="9802264at2"/>
<dbReference type="Proteomes" id="UP000000815">
    <property type="component" value="Chromosome"/>
</dbReference>
<dbReference type="Proteomes" id="UP000001019">
    <property type="component" value="Chromosome"/>
</dbReference>
<dbReference type="Proteomes" id="UP000002490">
    <property type="component" value="Chromosome"/>
</dbReference>
<dbReference type="GO" id="GO:0005886">
    <property type="term" value="C:plasma membrane"/>
    <property type="evidence" value="ECO:0007669"/>
    <property type="project" value="UniProtKB-SubCell"/>
</dbReference>
<dbReference type="GO" id="GO:0048502">
    <property type="term" value="F:ABC-type thiamine transporter activity"/>
    <property type="evidence" value="ECO:0007669"/>
    <property type="project" value="UniProtKB-EC"/>
</dbReference>
<dbReference type="GO" id="GO:0005524">
    <property type="term" value="F:ATP binding"/>
    <property type="evidence" value="ECO:0007669"/>
    <property type="project" value="UniProtKB-KW"/>
</dbReference>
<dbReference type="GO" id="GO:0016887">
    <property type="term" value="F:ATP hydrolysis activity"/>
    <property type="evidence" value="ECO:0007669"/>
    <property type="project" value="InterPro"/>
</dbReference>
<dbReference type="FunFam" id="3.40.50.300:FF:001071">
    <property type="entry name" value="Thiamine import ATP-binding protein ThiQ"/>
    <property type="match status" value="1"/>
</dbReference>
<dbReference type="Gene3D" id="3.40.50.300">
    <property type="entry name" value="P-loop containing nucleotide triphosphate hydrolases"/>
    <property type="match status" value="1"/>
</dbReference>
<dbReference type="InterPro" id="IPR003593">
    <property type="entry name" value="AAA+_ATPase"/>
</dbReference>
<dbReference type="InterPro" id="IPR050093">
    <property type="entry name" value="ABC_SmlMolc_Importer"/>
</dbReference>
<dbReference type="InterPro" id="IPR003439">
    <property type="entry name" value="ABC_transporter-like_ATP-bd"/>
</dbReference>
<dbReference type="InterPro" id="IPR017871">
    <property type="entry name" value="ABC_transporter-like_CS"/>
</dbReference>
<dbReference type="InterPro" id="IPR027417">
    <property type="entry name" value="P-loop_NTPase"/>
</dbReference>
<dbReference type="InterPro" id="IPR005968">
    <property type="entry name" value="Thiamine_ABC_ThiQ"/>
</dbReference>
<dbReference type="NCBIfam" id="NF008039">
    <property type="entry name" value="PRK10771.1"/>
    <property type="match status" value="1"/>
</dbReference>
<dbReference type="NCBIfam" id="TIGR01277">
    <property type="entry name" value="thiQ"/>
    <property type="match status" value="1"/>
</dbReference>
<dbReference type="PANTHER" id="PTHR42781">
    <property type="entry name" value="SPERMIDINE/PUTRESCINE IMPORT ATP-BINDING PROTEIN POTA"/>
    <property type="match status" value="1"/>
</dbReference>
<dbReference type="PANTHER" id="PTHR42781:SF1">
    <property type="entry name" value="THIAMINE IMPORT ATP-BINDING PROTEIN THIQ"/>
    <property type="match status" value="1"/>
</dbReference>
<dbReference type="Pfam" id="PF00005">
    <property type="entry name" value="ABC_tran"/>
    <property type="match status" value="1"/>
</dbReference>
<dbReference type="SMART" id="SM00382">
    <property type="entry name" value="AAA"/>
    <property type="match status" value="1"/>
</dbReference>
<dbReference type="SUPFAM" id="SSF52540">
    <property type="entry name" value="P-loop containing nucleoside triphosphate hydrolases"/>
    <property type="match status" value="1"/>
</dbReference>
<dbReference type="PROSITE" id="PS00211">
    <property type="entry name" value="ABC_TRANSPORTER_1"/>
    <property type="match status" value="1"/>
</dbReference>
<dbReference type="PROSITE" id="PS50893">
    <property type="entry name" value="ABC_TRANSPORTER_2"/>
    <property type="match status" value="1"/>
</dbReference>
<dbReference type="PROSITE" id="PS51288">
    <property type="entry name" value="THIQ"/>
    <property type="match status" value="1"/>
</dbReference>
<organism>
    <name type="scientific">Yersinia pestis</name>
    <dbReference type="NCBI Taxonomy" id="632"/>
    <lineage>
        <taxon>Bacteria</taxon>
        <taxon>Pseudomonadati</taxon>
        <taxon>Pseudomonadota</taxon>
        <taxon>Gammaproteobacteria</taxon>
        <taxon>Enterobacterales</taxon>
        <taxon>Yersiniaceae</taxon>
        <taxon>Yersinia</taxon>
    </lineage>
</organism>
<protein>
    <recommendedName>
        <fullName evidence="1">Thiamine import ATP-binding protein ThiQ</fullName>
        <ecNumber evidence="1">7.6.2.15</ecNumber>
    </recommendedName>
</protein>
<comment type="function">
    <text evidence="1">Part of the ABC transporter complex ThiBPQ involved in thiamine import. Responsible for energy coupling to the transport system.</text>
</comment>
<comment type="catalytic activity">
    <reaction evidence="1">
        <text>thiamine(out) + ATP + H2O = thiamine(in) + ADP + phosphate + H(+)</text>
        <dbReference type="Rhea" id="RHEA:29811"/>
        <dbReference type="ChEBI" id="CHEBI:15377"/>
        <dbReference type="ChEBI" id="CHEBI:15378"/>
        <dbReference type="ChEBI" id="CHEBI:18385"/>
        <dbReference type="ChEBI" id="CHEBI:30616"/>
        <dbReference type="ChEBI" id="CHEBI:43474"/>
        <dbReference type="ChEBI" id="CHEBI:456216"/>
        <dbReference type="EC" id="7.6.2.15"/>
    </reaction>
</comment>
<comment type="subunit">
    <text evidence="1">The complex is composed of two ATP-binding proteins (ThiQ), two transmembrane proteins (ThiP) and a solute-binding protein (ThiB).</text>
</comment>
<comment type="subcellular location">
    <subcellularLocation>
        <location evidence="1">Cell inner membrane</location>
        <topology evidence="1">Peripheral membrane protein</topology>
    </subcellularLocation>
</comment>
<comment type="similarity">
    <text evidence="1">Belongs to the ABC transporter superfamily. Thiamine importer (TC 3.A.1.19.1) family.</text>
</comment>
<comment type="sequence caution" evidence="2">
    <conflict type="erroneous initiation">
        <sequence resource="EMBL-CDS" id="AAM87201"/>
    </conflict>
</comment>
<comment type="sequence caution" evidence="2">
    <conflict type="erroneous initiation">
        <sequence resource="EMBL-CDS" id="AAS63807"/>
    </conflict>
</comment>
<comment type="sequence caution" evidence="2">
    <conflict type="erroneous initiation">
        <sequence resource="EMBL-CDS" id="CAL19201"/>
    </conflict>
</comment>
<evidence type="ECO:0000255" key="1">
    <source>
        <dbReference type="HAMAP-Rule" id="MF_01723"/>
    </source>
</evidence>
<evidence type="ECO:0000305" key="2"/>
<accession>Q0WJE4</accession>
<accession>Q74Q52</accession>
<accession>Q8CZP6</accession>
<name>THIQ_YERPE</name>
<feature type="chain" id="PRO_0000274470" description="Thiamine import ATP-binding protein ThiQ">
    <location>
        <begin position="1"/>
        <end position="236"/>
    </location>
</feature>
<feature type="domain" description="ABC transporter" evidence="1">
    <location>
        <begin position="2"/>
        <end position="230"/>
    </location>
</feature>
<feature type="binding site" evidence="1">
    <location>
        <begin position="32"/>
        <end position="39"/>
    </location>
    <ligand>
        <name>ATP</name>
        <dbReference type="ChEBI" id="CHEBI:30616"/>
    </ligand>
</feature>
<gene>
    <name evidence="1" type="primary">thiQ</name>
    <name type="ordered locus">YPO0520</name>
    <name type="ordered locus">y3653</name>
    <name type="ordered locus">YP_3659</name>
</gene>
<keyword id="KW-0067">ATP-binding</keyword>
<keyword id="KW-0997">Cell inner membrane</keyword>
<keyword id="KW-1003">Cell membrane</keyword>
<keyword id="KW-0472">Membrane</keyword>
<keyword id="KW-0547">Nucleotide-binding</keyword>
<keyword id="KW-1185">Reference proteome</keyword>
<keyword id="KW-1278">Translocase</keyword>
<keyword id="KW-0813">Transport</keyword>